<sequence>MVCIRRATVDDLLAMQACNLMCLPENYQMKYYLYHILSWPQLLYVAEDYNGRIVGYVLAKMEEESNECHGHITSLAVLRTHRKLGLATKLMTAAQAAMEQVYEAEYVSLHVRRSNRAAFNLYTETLGYKINDVEAKYYADGEDAYDMRKNLKGKQNHHHAHGHHHHHGGGCCSGDAKVVETAQAVDGKAVSK</sequence>
<organism>
    <name type="scientific">Arabidopsis thaliana</name>
    <name type="common">Mouse-ear cress</name>
    <dbReference type="NCBI Taxonomy" id="3702"/>
    <lineage>
        <taxon>Eukaryota</taxon>
        <taxon>Viridiplantae</taxon>
        <taxon>Streptophyta</taxon>
        <taxon>Embryophyta</taxon>
        <taxon>Tracheophyta</taxon>
        <taxon>Spermatophyta</taxon>
        <taxon>Magnoliopsida</taxon>
        <taxon>eudicotyledons</taxon>
        <taxon>Gunneridae</taxon>
        <taxon>Pentapetalae</taxon>
        <taxon>rosids</taxon>
        <taxon>malvids</taxon>
        <taxon>Brassicales</taxon>
        <taxon>Brassicaceae</taxon>
        <taxon>Camelineae</taxon>
        <taxon>Arabidopsis</taxon>
    </lineage>
</organism>
<feature type="chain" id="PRO_0000439078" description="N-terminal acetyltransferase A complex catalytic subunit NAA10">
    <location>
        <begin position="1"/>
        <end position="192"/>
    </location>
</feature>
<feature type="domain" description="N-acetyltransferase" evidence="1">
    <location>
        <begin position="2"/>
        <end position="152"/>
    </location>
</feature>
<name>NAA10_ARATH</name>
<reference key="1">
    <citation type="journal article" date="1998" name="DNA Res.">
        <title>Structural analysis of Arabidopsis thaliana chromosome 5. V. Sequence features of the regions of 1,381,565 bp covered by twenty one physically assigned P1 and TAC clones.</title>
        <authorList>
            <person name="Kaneko T."/>
            <person name="Kotani H."/>
            <person name="Nakamura Y."/>
            <person name="Sato S."/>
            <person name="Asamizu E."/>
            <person name="Miyajima N."/>
            <person name="Tabata S."/>
        </authorList>
    </citation>
    <scope>NUCLEOTIDE SEQUENCE [LARGE SCALE GENOMIC DNA]</scope>
    <source>
        <strain>cv. Columbia</strain>
    </source>
</reference>
<reference key="2">
    <citation type="journal article" date="2017" name="Plant J.">
        <title>Araport11: a complete reannotation of the Arabidopsis thaliana reference genome.</title>
        <authorList>
            <person name="Cheng C.Y."/>
            <person name="Krishnakumar V."/>
            <person name="Chan A.P."/>
            <person name="Thibaud-Nissen F."/>
            <person name="Schobel S."/>
            <person name="Town C.D."/>
        </authorList>
    </citation>
    <scope>GENOME REANNOTATION</scope>
    <source>
        <strain>cv. Columbia</strain>
    </source>
</reference>
<reference key="3">
    <citation type="journal article" date="2003" name="Science">
        <title>Empirical analysis of transcriptional activity in the Arabidopsis genome.</title>
        <authorList>
            <person name="Yamada K."/>
            <person name="Lim J."/>
            <person name="Dale J.M."/>
            <person name="Chen H."/>
            <person name="Shinn P."/>
            <person name="Palm C.J."/>
            <person name="Southwick A.M."/>
            <person name="Wu H.C."/>
            <person name="Kim C.J."/>
            <person name="Nguyen M."/>
            <person name="Pham P.K."/>
            <person name="Cheuk R.F."/>
            <person name="Karlin-Newmann G."/>
            <person name="Liu S.X."/>
            <person name="Lam B."/>
            <person name="Sakano H."/>
            <person name="Wu T."/>
            <person name="Yu G."/>
            <person name="Miranda M."/>
            <person name="Quach H.L."/>
            <person name="Tripp M."/>
            <person name="Chang C.H."/>
            <person name="Lee J.M."/>
            <person name="Toriumi M.J."/>
            <person name="Chan M.M."/>
            <person name="Tang C.C."/>
            <person name="Onodera C.S."/>
            <person name="Deng J.M."/>
            <person name="Akiyama K."/>
            <person name="Ansari Y."/>
            <person name="Arakawa T."/>
            <person name="Banh J."/>
            <person name="Banno F."/>
            <person name="Bowser L."/>
            <person name="Brooks S.Y."/>
            <person name="Carninci P."/>
            <person name="Chao Q."/>
            <person name="Choy N."/>
            <person name="Enju A."/>
            <person name="Goldsmith A.D."/>
            <person name="Gurjal M."/>
            <person name="Hansen N.F."/>
            <person name="Hayashizaki Y."/>
            <person name="Johnson-Hopson C."/>
            <person name="Hsuan V.W."/>
            <person name="Iida K."/>
            <person name="Karnes M."/>
            <person name="Khan S."/>
            <person name="Koesema E."/>
            <person name="Ishida J."/>
            <person name="Jiang P.X."/>
            <person name="Jones T."/>
            <person name="Kawai J."/>
            <person name="Kamiya A."/>
            <person name="Meyers C."/>
            <person name="Nakajima M."/>
            <person name="Narusaka M."/>
            <person name="Seki M."/>
            <person name="Sakurai T."/>
            <person name="Satou M."/>
            <person name="Tamse R."/>
            <person name="Vaysberg M."/>
            <person name="Wallender E.K."/>
            <person name="Wong C."/>
            <person name="Yamamura Y."/>
            <person name="Yuan S."/>
            <person name="Shinozaki K."/>
            <person name="Davis R.W."/>
            <person name="Theologis A."/>
            <person name="Ecker J.R."/>
        </authorList>
    </citation>
    <scope>NUCLEOTIDE SEQUENCE [LARGE SCALE MRNA]</scope>
    <source>
        <strain>cv. Columbia</strain>
    </source>
</reference>
<reference key="4">
    <citation type="submission" date="2002-03" db="EMBL/GenBank/DDBJ databases">
        <title>Full-length cDNA from Arabidopsis thaliana.</title>
        <authorList>
            <person name="Brover V.V."/>
            <person name="Troukhan M.E."/>
            <person name="Alexandrov N.A."/>
            <person name="Lu Y.-P."/>
            <person name="Flavell R.B."/>
            <person name="Feldmann K.A."/>
        </authorList>
    </citation>
    <scope>NUCLEOTIDE SEQUENCE [LARGE SCALE MRNA]</scope>
</reference>
<reference key="5">
    <citation type="journal article" date="2015" name="Nat. Commun.">
        <title>Downregulation of N-terminal acetylation triggers ABA-mediated drought responses in Arabidopsis.</title>
        <authorList>
            <person name="Linster E."/>
            <person name="Stephan I."/>
            <person name="Bienvenut W.V."/>
            <person name="Maple-Groedem J."/>
            <person name="Myklebust L.M."/>
            <person name="Huber M."/>
            <person name="Reichelt M."/>
            <person name="Sticht C."/>
            <person name="Moeller S.G."/>
            <person name="Meinnel T."/>
            <person name="Arnesen T."/>
            <person name="Giglione C."/>
            <person name="Hell R."/>
            <person name="Wirtz M."/>
        </authorList>
    </citation>
    <scope>FUNCTION</scope>
    <scope>TISSUE SPECIFICITY</scope>
    <scope>INTERACTION WITH NAA15</scope>
    <scope>DISRUPTION PHENOTYPE</scope>
    <scope>INDUCTION BY ABSCISIC ACID</scope>
    <source>
        <strain>cv. Columbia</strain>
    </source>
</reference>
<reference key="6">
    <citation type="journal article" date="2015" name="Plant Cell">
        <title>Two N-terminal acetyltransferases antagonistically regulate the stability of a nod-like receptor in Arabidopsis.</title>
        <authorList>
            <person name="Xu F."/>
            <person name="Huang Y."/>
            <person name="Li L."/>
            <person name="Gannon P."/>
            <person name="Linster E."/>
            <person name="Huber M."/>
            <person name="Kapos P."/>
            <person name="Bienvenut W."/>
            <person name="Polevoda B."/>
            <person name="Meinnel T."/>
            <person name="Hell R."/>
            <person name="Giglione C."/>
            <person name="Zhang Y."/>
            <person name="Wirtz M."/>
            <person name="Chen S."/>
            <person name="Li X."/>
        </authorList>
    </citation>
    <scope>FUNCTION</scope>
    <scope>CATALYTIC ACTIVITY</scope>
</reference>
<reference key="7">
    <citation type="journal article" date="2016" name="J. Exp. Bot.">
        <title>Protein N-terminal acetylation is required for embryogenesis in Arabidopsis.</title>
        <authorList>
            <person name="Feng J."/>
            <person name="Li R."/>
            <person name="Yu J."/>
            <person name="Ma S."/>
            <person name="Wu C."/>
            <person name="Li Y."/>
            <person name="Cao Y."/>
            <person name="Ma L."/>
        </authorList>
    </citation>
    <scope>FUNCTION</scope>
    <scope>DISRUPTION PHENOTYPE</scope>
    <scope>INTERACTION WITH NAA15</scope>
    <source>
        <strain>cv. Columbia</strain>
    </source>
</reference>
<reference key="8">
    <citation type="journal article" date="2016" name="Plant Signal. Behav.">
        <title>NatA is required for suspensor development in Arabidopsis.</title>
        <authorList>
            <person name="Feng J."/>
            <person name="Ma L."/>
        </authorList>
    </citation>
    <scope>FUNCTION</scope>
</reference>
<gene>
    <name evidence="6" type="primary">NAA10</name>
    <name evidence="8" type="ordered locus">At5g13780</name>
    <name evidence="9" type="ORF">MXE10.5</name>
</gene>
<comment type="function">
    <text evidence="2 3 4 5">Catalytic subunit of the NatA N-alpha-acetyltransferase complex (PubMed:25966763, PubMed:26184543). Required for male gametocyte development, embryogenesis, suspensor development and the formation of the quiescent center (QC) in the root meristem (PubMed:27385766, PubMed:27610925). Involved in plant immunity through the regulation of SNC1 and RPM1 stability (PubMed:25966763).</text>
</comment>
<comment type="catalytic activity">
    <reaction evidence="2">
        <text>N-terminal glycyl-[protein] + acetyl-CoA = N-terminal N(alpha)-acetylglycyl-[protein] + CoA + H(+)</text>
        <dbReference type="Rhea" id="RHEA:50496"/>
        <dbReference type="Rhea" id="RHEA-COMP:12666"/>
        <dbReference type="Rhea" id="RHEA-COMP:12700"/>
        <dbReference type="ChEBI" id="CHEBI:15378"/>
        <dbReference type="ChEBI" id="CHEBI:57287"/>
        <dbReference type="ChEBI" id="CHEBI:57288"/>
        <dbReference type="ChEBI" id="CHEBI:64723"/>
        <dbReference type="ChEBI" id="CHEBI:133369"/>
        <dbReference type="EC" id="2.3.1.255"/>
    </reaction>
</comment>
<comment type="catalytic activity">
    <reaction evidence="2">
        <text>N-terminal L-alanyl-[protein] + acetyl-CoA = N-terminal N(alpha)-acetyl-L-alanyl-[protein] + CoA + H(+)</text>
        <dbReference type="Rhea" id="RHEA:50500"/>
        <dbReference type="Rhea" id="RHEA-COMP:12701"/>
        <dbReference type="Rhea" id="RHEA-COMP:12702"/>
        <dbReference type="ChEBI" id="CHEBI:15378"/>
        <dbReference type="ChEBI" id="CHEBI:57287"/>
        <dbReference type="ChEBI" id="CHEBI:57288"/>
        <dbReference type="ChEBI" id="CHEBI:64718"/>
        <dbReference type="ChEBI" id="CHEBI:83683"/>
        <dbReference type="EC" id="2.3.1.255"/>
    </reaction>
</comment>
<comment type="catalytic activity">
    <reaction evidence="2">
        <text>N-terminal L-seryl-[protein] + acetyl-CoA = N-terminal N(alpha)-acetyl-L-seryl-[protein] + CoA + H(+)</text>
        <dbReference type="Rhea" id="RHEA:50504"/>
        <dbReference type="Rhea" id="RHEA-COMP:12703"/>
        <dbReference type="Rhea" id="RHEA-COMP:12704"/>
        <dbReference type="ChEBI" id="CHEBI:15378"/>
        <dbReference type="ChEBI" id="CHEBI:57287"/>
        <dbReference type="ChEBI" id="CHEBI:57288"/>
        <dbReference type="ChEBI" id="CHEBI:64738"/>
        <dbReference type="ChEBI" id="CHEBI:83690"/>
        <dbReference type="EC" id="2.3.1.255"/>
    </reaction>
</comment>
<comment type="catalytic activity">
    <reaction evidence="2">
        <text>N-terminal L-valyl-[protein] + acetyl-CoA = N-terminal N(alpha)-acetyl-L-valyl-[protein] + CoA + H(+)</text>
        <dbReference type="Rhea" id="RHEA:50508"/>
        <dbReference type="Rhea" id="RHEA-COMP:12705"/>
        <dbReference type="Rhea" id="RHEA-COMP:12706"/>
        <dbReference type="ChEBI" id="CHEBI:15378"/>
        <dbReference type="ChEBI" id="CHEBI:57287"/>
        <dbReference type="ChEBI" id="CHEBI:57288"/>
        <dbReference type="ChEBI" id="CHEBI:64741"/>
        <dbReference type="ChEBI" id="CHEBI:133371"/>
        <dbReference type="EC" id="2.3.1.255"/>
    </reaction>
</comment>
<comment type="catalytic activity">
    <reaction evidence="2">
        <text>N-terminal L-cysteinyl-[protein] + acetyl-CoA = N-terminal N(alpha)-acetyl-L-cysteinyl-[protein] + CoA + H(+)</text>
        <dbReference type="Rhea" id="RHEA:50512"/>
        <dbReference type="Rhea" id="RHEA-COMP:12707"/>
        <dbReference type="Rhea" id="RHEA-COMP:12708"/>
        <dbReference type="ChEBI" id="CHEBI:15378"/>
        <dbReference type="ChEBI" id="CHEBI:57287"/>
        <dbReference type="ChEBI" id="CHEBI:57288"/>
        <dbReference type="ChEBI" id="CHEBI:65250"/>
        <dbReference type="ChEBI" id="CHEBI:133372"/>
        <dbReference type="EC" id="2.3.1.255"/>
    </reaction>
</comment>
<comment type="catalytic activity">
    <reaction evidence="2">
        <text>N-terminal L-threonyl-[protein] + acetyl-CoA = N-terminal N(alpha)-acetyl-L-threonyl-[protein] + CoA + H(+)</text>
        <dbReference type="Rhea" id="RHEA:50516"/>
        <dbReference type="Rhea" id="RHEA-COMP:12709"/>
        <dbReference type="Rhea" id="RHEA-COMP:12710"/>
        <dbReference type="ChEBI" id="CHEBI:15378"/>
        <dbReference type="ChEBI" id="CHEBI:57287"/>
        <dbReference type="ChEBI" id="CHEBI:57288"/>
        <dbReference type="ChEBI" id="CHEBI:64739"/>
        <dbReference type="ChEBI" id="CHEBI:133375"/>
        <dbReference type="EC" id="2.3.1.255"/>
    </reaction>
</comment>
<comment type="subunit">
    <text evidence="3 4">Part of the NatA complex. Interacts with NAA15.</text>
</comment>
<comment type="tissue specificity">
    <text evidence="3">Expressed in leaves, roots, shoots and flowers.</text>
</comment>
<comment type="induction">
    <text evidence="3">Down-regulated upon abscisic acid treatment.</text>
</comment>
<comment type="disruption phenotype">
    <text evidence="3 4">Embryo lethal when homozygous.</text>
</comment>
<comment type="similarity">
    <text evidence="7">Belongs to the acetyltransferase family. ARD1 subfamily.</text>
</comment>
<protein>
    <recommendedName>
        <fullName evidence="6">N-terminal acetyltransferase A complex catalytic subunit NAA10</fullName>
        <shortName evidence="6">AtNAA10</shortName>
        <ecNumber evidence="2">2.3.1.255</ecNumber>
    </recommendedName>
</protein>
<evidence type="ECO:0000255" key="1">
    <source>
        <dbReference type="PROSITE-ProRule" id="PRU00532"/>
    </source>
</evidence>
<evidence type="ECO:0000269" key="2">
    <source>
    </source>
</evidence>
<evidence type="ECO:0000269" key="3">
    <source>
    </source>
</evidence>
<evidence type="ECO:0000269" key="4">
    <source>
    </source>
</evidence>
<evidence type="ECO:0000269" key="5">
    <source>
    </source>
</evidence>
<evidence type="ECO:0000303" key="6">
    <source>
    </source>
</evidence>
<evidence type="ECO:0000305" key="7"/>
<evidence type="ECO:0000312" key="8">
    <source>
        <dbReference type="Araport" id="AT5G13780"/>
    </source>
</evidence>
<evidence type="ECO:0000312" key="9">
    <source>
        <dbReference type="EMBL" id="AAK96745.1"/>
    </source>
</evidence>
<dbReference type="EC" id="2.3.1.255" evidence="2"/>
<dbReference type="EMBL" id="AB011484">
    <property type="protein sequence ID" value="BAB10599.1"/>
    <property type="molecule type" value="Genomic_DNA"/>
</dbReference>
<dbReference type="EMBL" id="CP002688">
    <property type="protein sequence ID" value="AED91940.1"/>
    <property type="molecule type" value="Genomic_DNA"/>
</dbReference>
<dbReference type="EMBL" id="AY054554">
    <property type="protein sequence ID" value="AAK96745.1"/>
    <property type="molecule type" value="mRNA"/>
</dbReference>
<dbReference type="EMBL" id="AY064689">
    <property type="protein sequence ID" value="AAL47392.1"/>
    <property type="molecule type" value="mRNA"/>
</dbReference>
<dbReference type="EMBL" id="AY087018">
    <property type="protein sequence ID" value="AAM64579.1"/>
    <property type="molecule type" value="mRNA"/>
</dbReference>
<dbReference type="RefSeq" id="NP_196882.1">
    <property type="nucleotide sequence ID" value="NM_121381.4"/>
</dbReference>
<dbReference type="SMR" id="Q9FKI4"/>
<dbReference type="FunCoup" id="Q9FKI4">
    <property type="interactions" value="3183"/>
</dbReference>
<dbReference type="IntAct" id="Q9FKI4">
    <property type="interactions" value="10"/>
</dbReference>
<dbReference type="STRING" id="3702.Q9FKI4"/>
<dbReference type="PaxDb" id="3702-AT5G13780.1"/>
<dbReference type="ProteomicsDB" id="251359"/>
<dbReference type="EnsemblPlants" id="AT5G13780.1">
    <property type="protein sequence ID" value="AT5G13780.1"/>
    <property type="gene ID" value="AT5G13780"/>
</dbReference>
<dbReference type="GeneID" id="831223"/>
<dbReference type="Gramene" id="AT5G13780.1">
    <property type="protein sequence ID" value="AT5G13780.1"/>
    <property type="gene ID" value="AT5G13780"/>
</dbReference>
<dbReference type="KEGG" id="ath:AT5G13780"/>
<dbReference type="Araport" id="AT5G13780"/>
<dbReference type="TAIR" id="AT5G13780">
    <property type="gene designation" value="NAA10"/>
</dbReference>
<dbReference type="eggNOG" id="KOG3235">
    <property type="taxonomic scope" value="Eukaryota"/>
</dbReference>
<dbReference type="HOGENOM" id="CLU_013985_7_2_1"/>
<dbReference type="InParanoid" id="Q9FKI4"/>
<dbReference type="OMA" id="MSMQNAN"/>
<dbReference type="OrthoDB" id="25586at2759"/>
<dbReference type="PhylomeDB" id="Q9FKI4"/>
<dbReference type="BRENDA" id="2.3.1.255">
    <property type="organism ID" value="399"/>
</dbReference>
<dbReference type="CD-CODE" id="4299E36E">
    <property type="entry name" value="Nucleolus"/>
</dbReference>
<dbReference type="PRO" id="PR:Q9FKI4"/>
<dbReference type="Proteomes" id="UP000006548">
    <property type="component" value="Chromosome 5"/>
</dbReference>
<dbReference type="ExpressionAtlas" id="Q9FKI4">
    <property type="expression patterns" value="baseline and differential"/>
</dbReference>
<dbReference type="GO" id="GO:0005829">
    <property type="term" value="C:cytosol"/>
    <property type="evidence" value="ECO:0000314"/>
    <property type="project" value="TAIR"/>
</dbReference>
<dbReference type="GO" id="GO:0031415">
    <property type="term" value="C:NatA complex"/>
    <property type="evidence" value="ECO:0000353"/>
    <property type="project" value="TAIR"/>
</dbReference>
<dbReference type="GO" id="GO:0009536">
    <property type="term" value="C:plastid"/>
    <property type="evidence" value="ECO:0007005"/>
    <property type="project" value="TAIR"/>
</dbReference>
<dbReference type="GO" id="GO:0003729">
    <property type="term" value="F:mRNA binding"/>
    <property type="evidence" value="ECO:0000314"/>
    <property type="project" value="TAIR"/>
</dbReference>
<dbReference type="GO" id="GO:0008080">
    <property type="term" value="F:N-acetyltransferase activity"/>
    <property type="evidence" value="ECO:0000314"/>
    <property type="project" value="TAIR"/>
</dbReference>
<dbReference type="GO" id="GO:1990189">
    <property type="term" value="F:protein N-terminal-serine acetyltransferase activity"/>
    <property type="evidence" value="ECO:0007669"/>
    <property type="project" value="RHEA"/>
</dbReference>
<dbReference type="GO" id="GO:0008999">
    <property type="term" value="F:protein-N-terminal-alanine acetyltransferase activity"/>
    <property type="evidence" value="ECO:0007669"/>
    <property type="project" value="RHEA"/>
</dbReference>
<dbReference type="GO" id="GO:0009793">
    <property type="term" value="P:embryo development ending in seed dormancy"/>
    <property type="evidence" value="ECO:0000315"/>
    <property type="project" value="TAIR"/>
</dbReference>
<dbReference type="GO" id="GO:0009414">
    <property type="term" value="P:response to water deprivation"/>
    <property type="evidence" value="ECO:0000315"/>
    <property type="project" value="TAIR"/>
</dbReference>
<dbReference type="CDD" id="cd04301">
    <property type="entry name" value="NAT_SF"/>
    <property type="match status" value="1"/>
</dbReference>
<dbReference type="FunFam" id="3.40.630.30:FF:000037">
    <property type="entry name" value="N-alpha-acetyltransferase daf-31-like"/>
    <property type="match status" value="1"/>
</dbReference>
<dbReference type="Gene3D" id="3.40.630.30">
    <property type="match status" value="1"/>
</dbReference>
<dbReference type="InterPro" id="IPR016181">
    <property type="entry name" value="Acyl_CoA_acyltransferase"/>
</dbReference>
<dbReference type="InterPro" id="IPR045047">
    <property type="entry name" value="Ard1-like"/>
</dbReference>
<dbReference type="InterPro" id="IPR000182">
    <property type="entry name" value="GNAT_dom"/>
</dbReference>
<dbReference type="PANTHER" id="PTHR23091">
    <property type="entry name" value="N-TERMINAL ACETYLTRANSFERASE"/>
    <property type="match status" value="1"/>
</dbReference>
<dbReference type="PANTHER" id="PTHR23091:SF4">
    <property type="entry name" value="N-TERMINAL AMINO-ACID N(ALPHA)-ACETYLTRANSFERASE NATA"/>
    <property type="match status" value="1"/>
</dbReference>
<dbReference type="Pfam" id="PF00583">
    <property type="entry name" value="Acetyltransf_1"/>
    <property type="match status" value="1"/>
</dbReference>
<dbReference type="SUPFAM" id="SSF55729">
    <property type="entry name" value="Acyl-CoA N-acyltransferases (Nat)"/>
    <property type="match status" value="1"/>
</dbReference>
<dbReference type="PROSITE" id="PS51186">
    <property type="entry name" value="GNAT"/>
    <property type="match status" value="1"/>
</dbReference>
<proteinExistence type="evidence at protein level"/>
<keyword id="KW-0012">Acyltransferase</keyword>
<keyword id="KW-1185">Reference proteome</keyword>
<keyword id="KW-0808">Transferase</keyword>
<accession>Q9FKI4</accession>